<dbReference type="EC" id="6.1.1.6" evidence="1"/>
<dbReference type="EMBL" id="CP000020">
    <property type="protein sequence ID" value="AAW84948.1"/>
    <property type="molecule type" value="Genomic_DNA"/>
</dbReference>
<dbReference type="RefSeq" id="WP_011261233.1">
    <property type="nucleotide sequence ID" value="NC_006840.2"/>
</dbReference>
<dbReference type="RefSeq" id="YP_203836.1">
    <property type="nucleotide sequence ID" value="NC_006840.2"/>
</dbReference>
<dbReference type="SMR" id="Q5E7P8"/>
<dbReference type="STRING" id="312309.VF_0453"/>
<dbReference type="EnsemblBacteria" id="AAW84948">
    <property type="protein sequence ID" value="AAW84948"/>
    <property type="gene ID" value="VF_0453"/>
</dbReference>
<dbReference type="GeneID" id="54163089"/>
<dbReference type="KEGG" id="vfi:VF_0453"/>
<dbReference type="PATRIC" id="fig|312309.11.peg.443"/>
<dbReference type="eggNOG" id="COG1190">
    <property type="taxonomic scope" value="Bacteria"/>
</dbReference>
<dbReference type="HOGENOM" id="CLU_008255_6_0_6"/>
<dbReference type="OrthoDB" id="9802326at2"/>
<dbReference type="Proteomes" id="UP000000537">
    <property type="component" value="Chromosome I"/>
</dbReference>
<dbReference type="GO" id="GO:0005829">
    <property type="term" value="C:cytosol"/>
    <property type="evidence" value="ECO:0007669"/>
    <property type="project" value="TreeGrafter"/>
</dbReference>
<dbReference type="GO" id="GO:0005524">
    <property type="term" value="F:ATP binding"/>
    <property type="evidence" value="ECO:0007669"/>
    <property type="project" value="UniProtKB-UniRule"/>
</dbReference>
<dbReference type="GO" id="GO:0004824">
    <property type="term" value="F:lysine-tRNA ligase activity"/>
    <property type="evidence" value="ECO:0007669"/>
    <property type="project" value="UniProtKB-UniRule"/>
</dbReference>
<dbReference type="GO" id="GO:0000287">
    <property type="term" value="F:magnesium ion binding"/>
    <property type="evidence" value="ECO:0007669"/>
    <property type="project" value="UniProtKB-UniRule"/>
</dbReference>
<dbReference type="GO" id="GO:0000049">
    <property type="term" value="F:tRNA binding"/>
    <property type="evidence" value="ECO:0007669"/>
    <property type="project" value="TreeGrafter"/>
</dbReference>
<dbReference type="GO" id="GO:0006430">
    <property type="term" value="P:lysyl-tRNA aminoacylation"/>
    <property type="evidence" value="ECO:0007669"/>
    <property type="project" value="UniProtKB-UniRule"/>
</dbReference>
<dbReference type="CDD" id="cd00775">
    <property type="entry name" value="LysRS_core"/>
    <property type="match status" value="1"/>
</dbReference>
<dbReference type="CDD" id="cd04322">
    <property type="entry name" value="LysRS_N"/>
    <property type="match status" value="1"/>
</dbReference>
<dbReference type="FunFam" id="2.40.50.140:FF:000024">
    <property type="entry name" value="Lysine--tRNA ligase"/>
    <property type="match status" value="1"/>
</dbReference>
<dbReference type="FunFam" id="3.30.930.10:FF:000001">
    <property type="entry name" value="Lysine--tRNA ligase"/>
    <property type="match status" value="1"/>
</dbReference>
<dbReference type="Gene3D" id="3.30.930.10">
    <property type="entry name" value="Bira Bifunctional Protein, Domain 2"/>
    <property type="match status" value="1"/>
</dbReference>
<dbReference type="Gene3D" id="2.40.50.140">
    <property type="entry name" value="Nucleic acid-binding proteins"/>
    <property type="match status" value="1"/>
</dbReference>
<dbReference type="HAMAP" id="MF_00252">
    <property type="entry name" value="Lys_tRNA_synth_class2"/>
    <property type="match status" value="1"/>
</dbReference>
<dbReference type="InterPro" id="IPR004364">
    <property type="entry name" value="Aa-tRNA-synt_II"/>
</dbReference>
<dbReference type="InterPro" id="IPR006195">
    <property type="entry name" value="aa-tRNA-synth_II"/>
</dbReference>
<dbReference type="InterPro" id="IPR045864">
    <property type="entry name" value="aa-tRNA-synth_II/BPL/LPL"/>
</dbReference>
<dbReference type="InterPro" id="IPR002313">
    <property type="entry name" value="Lys-tRNA-ligase_II"/>
</dbReference>
<dbReference type="InterPro" id="IPR044136">
    <property type="entry name" value="Lys-tRNA-ligase_II_N"/>
</dbReference>
<dbReference type="InterPro" id="IPR018149">
    <property type="entry name" value="Lys-tRNA-synth_II_C"/>
</dbReference>
<dbReference type="InterPro" id="IPR012340">
    <property type="entry name" value="NA-bd_OB-fold"/>
</dbReference>
<dbReference type="InterPro" id="IPR004365">
    <property type="entry name" value="NA-bd_OB_tRNA"/>
</dbReference>
<dbReference type="NCBIfam" id="TIGR00499">
    <property type="entry name" value="lysS_bact"/>
    <property type="match status" value="1"/>
</dbReference>
<dbReference type="NCBIfam" id="NF001756">
    <property type="entry name" value="PRK00484.1"/>
    <property type="match status" value="1"/>
</dbReference>
<dbReference type="PANTHER" id="PTHR42918:SF15">
    <property type="entry name" value="LYSINE--TRNA LIGASE, CHLOROPLASTIC_MITOCHONDRIAL"/>
    <property type="match status" value="1"/>
</dbReference>
<dbReference type="PANTHER" id="PTHR42918">
    <property type="entry name" value="LYSYL-TRNA SYNTHETASE"/>
    <property type="match status" value="1"/>
</dbReference>
<dbReference type="Pfam" id="PF00152">
    <property type="entry name" value="tRNA-synt_2"/>
    <property type="match status" value="1"/>
</dbReference>
<dbReference type="Pfam" id="PF01336">
    <property type="entry name" value="tRNA_anti-codon"/>
    <property type="match status" value="1"/>
</dbReference>
<dbReference type="PRINTS" id="PR00982">
    <property type="entry name" value="TRNASYNTHLYS"/>
</dbReference>
<dbReference type="SUPFAM" id="SSF55681">
    <property type="entry name" value="Class II aaRS and biotin synthetases"/>
    <property type="match status" value="1"/>
</dbReference>
<dbReference type="SUPFAM" id="SSF50249">
    <property type="entry name" value="Nucleic acid-binding proteins"/>
    <property type="match status" value="1"/>
</dbReference>
<dbReference type="PROSITE" id="PS50862">
    <property type="entry name" value="AA_TRNA_LIGASE_II"/>
    <property type="match status" value="1"/>
</dbReference>
<name>SYK_ALIF1</name>
<proteinExistence type="inferred from homology"/>
<feature type="chain" id="PRO_1000012961" description="Lysine--tRNA ligase">
    <location>
        <begin position="1"/>
        <end position="501"/>
    </location>
</feature>
<feature type="binding site" evidence="1">
    <location>
        <position position="411"/>
    </location>
    <ligand>
        <name>Mg(2+)</name>
        <dbReference type="ChEBI" id="CHEBI:18420"/>
        <label>1</label>
    </ligand>
</feature>
<feature type="binding site" evidence="1">
    <location>
        <position position="418"/>
    </location>
    <ligand>
        <name>Mg(2+)</name>
        <dbReference type="ChEBI" id="CHEBI:18420"/>
        <label>1</label>
    </ligand>
</feature>
<feature type="binding site" evidence="1">
    <location>
        <position position="418"/>
    </location>
    <ligand>
        <name>Mg(2+)</name>
        <dbReference type="ChEBI" id="CHEBI:18420"/>
        <label>2</label>
    </ligand>
</feature>
<comment type="catalytic activity">
    <reaction evidence="1">
        <text>tRNA(Lys) + L-lysine + ATP = L-lysyl-tRNA(Lys) + AMP + diphosphate</text>
        <dbReference type="Rhea" id="RHEA:20792"/>
        <dbReference type="Rhea" id="RHEA-COMP:9696"/>
        <dbReference type="Rhea" id="RHEA-COMP:9697"/>
        <dbReference type="ChEBI" id="CHEBI:30616"/>
        <dbReference type="ChEBI" id="CHEBI:32551"/>
        <dbReference type="ChEBI" id="CHEBI:33019"/>
        <dbReference type="ChEBI" id="CHEBI:78442"/>
        <dbReference type="ChEBI" id="CHEBI:78529"/>
        <dbReference type="ChEBI" id="CHEBI:456215"/>
        <dbReference type="EC" id="6.1.1.6"/>
    </reaction>
</comment>
<comment type="cofactor">
    <cofactor evidence="1">
        <name>Mg(2+)</name>
        <dbReference type="ChEBI" id="CHEBI:18420"/>
    </cofactor>
    <text evidence="1">Binds 3 Mg(2+) ions per subunit.</text>
</comment>
<comment type="subunit">
    <text evidence="1">Homodimer.</text>
</comment>
<comment type="subcellular location">
    <subcellularLocation>
        <location evidence="1">Cytoplasm</location>
    </subcellularLocation>
</comment>
<comment type="similarity">
    <text evidence="1">Belongs to the class-II aminoacyl-tRNA synthetase family.</text>
</comment>
<evidence type="ECO:0000255" key="1">
    <source>
        <dbReference type="HAMAP-Rule" id="MF_00252"/>
    </source>
</evidence>
<organism>
    <name type="scientific">Aliivibrio fischeri (strain ATCC 700601 / ES114)</name>
    <name type="common">Vibrio fischeri</name>
    <dbReference type="NCBI Taxonomy" id="312309"/>
    <lineage>
        <taxon>Bacteria</taxon>
        <taxon>Pseudomonadati</taxon>
        <taxon>Pseudomonadota</taxon>
        <taxon>Gammaproteobacteria</taxon>
        <taxon>Vibrionales</taxon>
        <taxon>Vibrionaceae</taxon>
        <taxon>Aliivibrio</taxon>
    </lineage>
</organism>
<sequence length="501" mass="56898">MTEQVQLDENKLIAERRGKLDHIRQACKANGHPNDFRRDSLAGDLQAEFGEKTKEELEELNHVVAIAGRVMAKRGPFLLIQEVSGKIQAYAAKEVQKELKDKYQGLDIGDIIGVKGALHKSGKGDLYVNMEEYVLLTKALRPLPEKFHGLTDQEMRYRQRYVDLIVNDDSRHAFIVRSKVVAAIRNFMVDKGFMEVETPMMHVIPGGASARPFVTHHNALDVDMYLRIAPELYLKRLVVGGFERVFEINRNFRNEGLSPRHNPEFTMMEFYMAYADYNDLMDLTEEMLSTVATSVLGSDKMPYGEHTVDFGGKYARMSMLDAIKQYNPDHAEIQALTYEGVKDRDLMVSIAKSVHVDVESFWTCGQLLEEIFGETAEPKLMQPTFITEYPADISPLARRNDDNDFITDRFEFFIGGREVANGFSELNDAQDQDERFKAQVNAKESGDDEAMYYDADYITALEHGLPPTAGQGIGIDRLVMLLTNTHTIRDVILFPSMRPQA</sequence>
<protein>
    <recommendedName>
        <fullName evidence="1">Lysine--tRNA ligase</fullName>
        <ecNumber evidence="1">6.1.1.6</ecNumber>
    </recommendedName>
    <alternativeName>
        <fullName evidence="1">Lysyl-tRNA synthetase</fullName>
        <shortName evidence="1">LysRS</shortName>
    </alternativeName>
</protein>
<keyword id="KW-0030">Aminoacyl-tRNA synthetase</keyword>
<keyword id="KW-0067">ATP-binding</keyword>
<keyword id="KW-0963">Cytoplasm</keyword>
<keyword id="KW-0436">Ligase</keyword>
<keyword id="KW-0460">Magnesium</keyword>
<keyword id="KW-0479">Metal-binding</keyword>
<keyword id="KW-0547">Nucleotide-binding</keyword>
<keyword id="KW-0648">Protein biosynthesis</keyword>
<keyword id="KW-1185">Reference proteome</keyword>
<gene>
    <name evidence="1" type="primary">lysS</name>
    <name type="ordered locus">VF_0453</name>
</gene>
<reference key="1">
    <citation type="journal article" date="2005" name="Proc. Natl. Acad. Sci. U.S.A.">
        <title>Complete genome sequence of Vibrio fischeri: a symbiotic bacterium with pathogenic congeners.</title>
        <authorList>
            <person name="Ruby E.G."/>
            <person name="Urbanowski M."/>
            <person name="Campbell J."/>
            <person name="Dunn A."/>
            <person name="Faini M."/>
            <person name="Gunsalus R."/>
            <person name="Lostroh P."/>
            <person name="Lupp C."/>
            <person name="McCann J."/>
            <person name="Millikan D."/>
            <person name="Schaefer A."/>
            <person name="Stabb E."/>
            <person name="Stevens A."/>
            <person name="Visick K."/>
            <person name="Whistler C."/>
            <person name="Greenberg E.P."/>
        </authorList>
    </citation>
    <scope>NUCLEOTIDE SEQUENCE [LARGE SCALE GENOMIC DNA]</scope>
    <source>
        <strain>ATCC 700601 / ES114</strain>
    </source>
</reference>
<accession>Q5E7P8</accession>